<organism>
    <name type="scientific">Vibrio parahaemolyticus serotype O3:K6 (strain RIMD 2210633)</name>
    <dbReference type="NCBI Taxonomy" id="223926"/>
    <lineage>
        <taxon>Bacteria</taxon>
        <taxon>Pseudomonadati</taxon>
        <taxon>Pseudomonadota</taxon>
        <taxon>Gammaproteobacteria</taxon>
        <taxon>Vibrionales</taxon>
        <taxon>Vibrionaceae</taxon>
        <taxon>Vibrio</taxon>
    </lineage>
</organism>
<dbReference type="EMBL" id="BA000031">
    <property type="protein sequence ID" value="BAC58534.1"/>
    <property type="molecule type" value="Genomic_DNA"/>
</dbReference>
<dbReference type="RefSeq" id="NP_796650.1">
    <property type="nucleotide sequence ID" value="NC_004603.1"/>
</dbReference>
<dbReference type="RefSeq" id="WP_005455656.1">
    <property type="nucleotide sequence ID" value="NC_004603.1"/>
</dbReference>
<dbReference type="SMR" id="Q87SZ9"/>
<dbReference type="GeneID" id="1187738"/>
<dbReference type="KEGG" id="vpa:VP0271"/>
<dbReference type="PATRIC" id="fig|223926.6.peg.262"/>
<dbReference type="eggNOG" id="COG0096">
    <property type="taxonomic scope" value="Bacteria"/>
</dbReference>
<dbReference type="HOGENOM" id="CLU_098428_0_0_6"/>
<dbReference type="Proteomes" id="UP000002493">
    <property type="component" value="Chromosome 1"/>
</dbReference>
<dbReference type="GO" id="GO:1990904">
    <property type="term" value="C:ribonucleoprotein complex"/>
    <property type="evidence" value="ECO:0007669"/>
    <property type="project" value="UniProtKB-KW"/>
</dbReference>
<dbReference type="GO" id="GO:0005840">
    <property type="term" value="C:ribosome"/>
    <property type="evidence" value="ECO:0007669"/>
    <property type="project" value="UniProtKB-KW"/>
</dbReference>
<dbReference type="GO" id="GO:0019843">
    <property type="term" value="F:rRNA binding"/>
    <property type="evidence" value="ECO:0007669"/>
    <property type="project" value="UniProtKB-UniRule"/>
</dbReference>
<dbReference type="GO" id="GO:0003735">
    <property type="term" value="F:structural constituent of ribosome"/>
    <property type="evidence" value="ECO:0007669"/>
    <property type="project" value="InterPro"/>
</dbReference>
<dbReference type="GO" id="GO:0006412">
    <property type="term" value="P:translation"/>
    <property type="evidence" value="ECO:0007669"/>
    <property type="project" value="UniProtKB-UniRule"/>
</dbReference>
<dbReference type="FunFam" id="3.30.1370.30:FF:000003">
    <property type="entry name" value="30S ribosomal protein S8"/>
    <property type="match status" value="1"/>
</dbReference>
<dbReference type="FunFam" id="3.30.1490.10:FF:000001">
    <property type="entry name" value="30S ribosomal protein S8"/>
    <property type="match status" value="1"/>
</dbReference>
<dbReference type="Gene3D" id="3.30.1370.30">
    <property type="match status" value="1"/>
</dbReference>
<dbReference type="Gene3D" id="3.30.1490.10">
    <property type="match status" value="1"/>
</dbReference>
<dbReference type="HAMAP" id="MF_01302_B">
    <property type="entry name" value="Ribosomal_uS8_B"/>
    <property type="match status" value="1"/>
</dbReference>
<dbReference type="InterPro" id="IPR000630">
    <property type="entry name" value="Ribosomal_uS8"/>
</dbReference>
<dbReference type="InterPro" id="IPR047863">
    <property type="entry name" value="Ribosomal_uS8_CS"/>
</dbReference>
<dbReference type="InterPro" id="IPR035987">
    <property type="entry name" value="Ribosomal_uS8_sf"/>
</dbReference>
<dbReference type="NCBIfam" id="NF001109">
    <property type="entry name" value="PRK00136.1"/>
    <property type="match status" value="1"/>
</dbReference>
<dbReference type="PANTHER" id="PTHR11758">
    <property type="entry name" value="40S RIBOSOMAL PROTEIN S15A"/>
    <property type="match status" value="1"/>
</dbReference>
<dbReference type="Pfam" id="PF00410">
    <property type="entry name" value="Ribosomal_S8"/>
    <property type="match status" value="1"/>
</dbReference>
<dbReference type="SUPFAM" id="SSF56047">
    <property type="entry name" value="Ribosomal protein S8"/>
    <property type="match status" value="1"/>
</dbReference>
<dbReference type="PROSITE" id="PS00053">
    <property type="entry name" value="RIBOSOMAL_S8"/>
    <property type="match status" value="1"/>
</dbReference>
<keyword id="KW-0687">Ribonucleoprotein</keyword>
<keyword id="KW-0689">Ribosomal protein</keyword>
<keyword id="KW-0694">RNA-binding</keyword>
<keyword id="KW-0699">rRNA-binding</keyword>
<protein>
    <recommendedName>
        <fullName evidence="1">Small ribosomal subunit protein uS8</fullName>
    </recommendedName>
    <alternativeName>
        <fullName evidence="2">30S ribosomal protein S8</fullName>
    </alternativeName>
</protein>
<gene>
    <name evidence="1" type="primary">rpsH</name>
    <name type="ordered locus">VP0271</name>
</gene>
<sequence>MSMQDPISDMLTRVRNGQAANKVAVKMPSSKLKVAIAALLKAEGYIVDFAVEGEAKPELEVTLKYFQAKPVIEQLKRVSRPGLRVYKKKDELPSVMGGLGIAIVSTSKGLMSDRAARKAGLGGEIICYVA</sequence>
<feature type="chain" id="PRO_0000126521" description="Small ribosomal subunit protein uS8">
    <location>
        <begin position="1"/>
        <end position="130"/>
    </location>
</feature>
<accession>Q87SZ9</accession>
<reference key="1">
    <citation type="journal article" date="2003" name="Lancet">
        <title>Genome sequence of Vibrio parahaemolyticus: a pathogenic mechanism distinct from that of V. cholerae.</title>
        <authorList>
            <person name="Makino K."/>
            <person name="Oshima K."/>
            <person name="Kurokawa K."/>
            <person name="Yokoyama K."/>
            <person name="Uda T."/>
            <person name="Tagomori K."/>
            <person name="Iijima Y."/>
            <person name="Najima M."/>
            <person name="Nakano M."/>
            <person name="Yamashita A."/>
            <person name="Kubota Y."/>
            <person name="Kimura S."/>
            <person name="Yasunaga T."/>
            <person name="Honda T."/>
            <person name="Shinagawa H."/>
            <person name="Hattori M."/>
            <person name="Iida T."/>
        </authorList>
    </citation>
    <scope>NUCLEOTIDE SEQUENCE [LARGE SCALE GENOMIC DNA]</scope>
    <source>
        <strain>RIMD 2210633</strain>
    </source>
</reference>
<proteinExistence type="inferred from homology"/>
<name>RS8_VIBPA</name>
<evidence type="ECO:0000255" key="1">
    <source>
        <dbReference type="HAMAP-Rule" id="MF_01302"/>
    </source>
</evidence>
<evidence type="ECO:0000305" key="2"/>
<comment type="function">
    <text evidence="1">One of the primary rRNA binding proteins, it binds directly to 16S rRNA central domain where it helps coordinate assembly of the platform of the 30S subunit.</text>
</comment>
<comment type="subunit">
    <text evidence="1">Part of the 30S ribosomal subunit. Contacts proteins S5 and S12.</text>
</comment>
<comment type="similarity">
    <text evidence="1">Belongs to the universal ribosomal protein uS8 family.</text>
</comment>